<organism>
    <name type="scientific">Trichormus variabilis (strain ATCC 29413 / PCC 7937)</name>
    <name type="common">Anabaena variabilis</name>
    <dbReference type="NCBI Taxonomy" id="240292"/>
    <lineage>
        <taxon>Bacteria</taxon>
        <taxon>Bacillati</taxon>
        <taxon>Cyanobacteriota</taxon>
        <taxon>Cyanophyceae</taxon>
        <taxon>Nostocales</taxon>
        <taxon>Nostocaceae</taxon>
        <taxon>Trichormus</taxon>
    </lineage>
</organism>
<comment type="function">
    <text evidence="1">One of the components of the core complex of photosystem II (PSII). PSII is a light-driven water:plastoquinone oxidoreductase that uses light energy to abstract electrons from H(2)O, generating O(2) and a proton gradient subsequently used for ATP formation. It consists of a core antenna complex that captures photons, and an electron transfer chain that converts photonic excitation into a charge separation.</text>
</comment>
<comment type="subunit">
    <text evidence="1">PSII is composed of 1 copy each of membrane proteins PsbA, PsbB, PsbC, PsbD, PsbE, PsbF, PsbH, PsbI, PsbJ, PsbK, PsbL, PsbM, PsbT, PsbX, PsbY, PsbZ, Psb30/Ycf12, peripheral proteins PsbO, CyanoQ (PsbQ), PsbU, PsbV and a large number of cofactors. It forms dimeric complexes.</text>
</comment>
<comment type="subcellular location">
    <subcellularLocation>
        <location evidence="1">Cellular thylakoid membrane</location>
        <topology evidence="1">Single-pass membrane protein</topology>
    </subcellularLocation>
</comment>
<comment type="similarity">
    <text evidence="1">Belongs to the PsbJ family.</text>
</comment>
<comment type="sequence caution" evidence="2">
    <conflict type="erroneous initiation">
        <sequence resource="EMBL-CDS" id="ABA21474"/>
    </conflict>
    <text>Extended N-terminus.</text>
</comment>
<proteinExistence type="inferred from homology"/>
<reference key="1">
    <citation type="journal article" date="2014" name="Stand. Genomic Sci.">
        <title>Complete genome sequence of Anabaena variabilis ATCC 29413.</title>
        <authorList>
            <person name="Thiel T."/>
            <person name="Pratte B.S."/>
            <person name="Zhong J."/>
            <person name="Goodwin L."/>
            <person name="Copeland A."/>
            <person name="Lucas S."/>
            <person name="Han C."/>
            <person name="Pitluck S."/>
            <person name="Land M.L."/>
            <person name="Kyrpides N.C."/>
            <person name="Woyke T."/>
        </authorList>
    </citation>
    <scope>NUCLEOTIDE SEQUENCE [LARGE SCALE GENOMIC DNA]</scope>
    <source>
        <strain>ATCC 29413 / PCC 7937</strain>
    </source>
</reference>
<feature type="chain" id="PRO_0000292223" description="Photosystem II reaction center protein J">
    <location>
        <begin position="1"/>
        <end position="40"/>
    </location>
</feature>
<feature type="transmembrane region" description="Helical" evidence="1">
    <location>
        <begin position="8"/>
        <end position="28"/>
    </location>
</feature>
<sequence length="40" mass="3973">MSAGSGRIPLWVVATIAGLGVITVVGIFFYGAYAGLGSSI</sequence>
<accession>Q3MC12</accession>
<protein>
    <recommendedName>
        <fullName evidence="1">Photosystem II reaction center protein J</fullName>
        <shortName evidence="1">PSII-J</shortName>
    </recommendedName>
</protein>
<name>PSBJ_TRIV2</name>
<gene>
    <name evidence="1" type="primary">psbJ</name>
    <name type="ordered locus">Ava_1852</name>
</gene>
<keyword id="KW-0472">Membrane</keyword>
<keyword id="KW-0602">Photosynthesis</keyword>
<keyword id="KW-0604">Photosystem II</keyword>
<keyword id="KW-0674">Reaction center</keyword>
<keyword id="KW-0793">Thylakoid</keyword>
<keyword id="KW-0812">Transmembrane</keyword>
<keyword id="KW-1133">Transmembrane helix</keyword>
<evidence type="ECO:0000255" key="1">
    <source>
        <dbReference type="HAMAP-Rule" id="MF_01305"/>
    </source>
</evidence>
<evidence type="ECO:0000305" key="2"/>
<dbReference type="EMBL" id="CP000117">
    <property type="protein sequence ID" value="ABA21474.1"/>
    <property type="status" value="ALT_INIT"/>
    <property type="molecule type" value="Genomic_DNA"/>
</dbReference>
<dbReference type="SMR" id="Q3MC12"/>
<dbReference type="STRING" id="240292.Ava_1852"/>
<dbReference type="KEGG" id="ava:Ava_1852"/>
<dbReference type="eggNOG" id="ENOG5033ABP">
    <property type="taxonomic scope" value="Bacteria"/>
</dbReference>
<dbReference type="HOGENOM" id="CLU_215151_0_0_3"/>
<dbReference type="Proteomes" id="UP000002533">
    <property type="component" value="Chromosome"/>
</dbReference>
<dbReference type="GO" id="GO:0009539">
    <property type="term" value="C:photosystem II reaction center"/>
    <property type="evidence" value="ECO:0007669"/>
    <property type="project" value="InterPro"/>
</dbReference>
<dbReference type="GO" id="GO:0031676">
    <property type="term" value="C:plasma membrane-derived thylakoid membrane"/>
    <property type="evidence" value="ECO:0007669"/>
    <property type="project" value="UniProtKB-SubCell"/>
</dbReference>
<dbReference type="GO" id="GO:0015979">
    <property type="term" value="P:photosynthesis"/>
    <property type="evidence" value="ECO:0007669"/>
    <property type="project" value="UniProtKB-UniRule"/>
</dbReference>
<dbReference type="Gene3D" id="6.10.250.2070">
    <property type="match status" value="1"/>
</dbReference>
<dbReference type="HAMAP" id="MF_01305">
    <property type="entry name" value="PSII_PsbJ"/>
    <property type="match status" value="1"/>
</dbReference>
<dbReference type="InterPro" id="IPR002682">
    <property type="entry name" value="PSII_PsbJ"/>
</dbReference>
<dbReference type="InterPro" id="IPR037267">
    <property type="entry name" value="PSII_PsbJ_sf"/>
</dbReference>
<dbReference type="NCBIfam" id="NF002722">
    <property type="entry name" value="PRK02565.1"/>
    <property type="match status" value="1"/>
</dbReference>
<dbReference type="PANTHER" id="PTHR34812">
    <property type="entry name" value="PHOTOSYSTEM II REACTION CENTER PROTEIN J"/>
    <property type="match status" value="1"/>
</dbReference>
<dbReference type="PANTHER" id="PTHR34812:SF3">
    <property type="entry name" value="PHOTOSYSTEM II REACTION CENTER PROTEIN J"/>
    <property type="match status" value="1"/>
</dbReference>
<dbReference type="Pfam" id="PF01788">
    <property type="entry name" value="PsbJ"/>
    <property type="match status" value="1"/>
</dbReference>
<dbReference type="SUPFAM" id="SSF161021">
    <property type="entry name" value="Photosystem II reaction center protein J, PsbJ"/>
    <property type="match status" value="1"/>
</dbReference>